<reference key="1">
    <citation type="submission" date="2007-03" db="EMBL/GenBank/DDBJ databases">
        <title>Sequencing analysis of Crucihimalaya wallichii chloroplast DNA.</title>
        <authorList>
            <person name="Hosouchi T."/>
            <person name="Tsuruoka H."/>
            <person name="Kotani H."/>
        </authorList>
    </citation>
    <scope>NUCLEOTIDE SEQUENCE [LARGE SCALE GENOMIC DNA]</scope>
</reference>
<evidence type="ECO:0000255" key="1">
    <source>
        <dbReference type="HAMAP-Rule" id="MF_00270"/>
    </source>
</evidence>
<evidence type="ECO:0000305" key="2"/>
<protein>
    <recommendedName>
        <fullName evidence="1">Small ribosomal subunit protein bS18c</fullName>
    </recommendedName>
    <alternativeName>
        <fullName evidence="2">30S ribosomal protein S18, chloroplastic</fullName>
    </alternativeName>
</protein>
<comment type="subunit">
    <text evidence="1">Part of the 30S ribosomal subunit.</text>
</comment>
<comment type="subcellular location">
    <subcellularLocation>
        <location>Plastid</location>
        <location>Chloroplast</location>
    </subcellularLocation>
</comment>
<comment type="similarity">
    <text evidence="1">Belongs to the bacterial ribosomal protein bS18 family.</text>
</comment>
<name>RR18_CRUWA</name>
<accession>A4QKV3</accession>
<gene>
    <name evidence="1" type="primary">rps18</name>
</gene>
<sequence length="101" mass="12060">MNKSKRLFTKSKRSFRRRLPPIQSGDRIDYRNMSLISRFISEQGKILSRRVNRVTLKQQRLITIAIKQARILSLLPFLNNQKQFERSESTPRTTSLRTRKK</sequence>
<keyword id="KW-0150">Chloroplast</keyword>
<keyword id="KW-0934">Plastid</keyword>
<keyword id="KW-0687">Ribonucleoprotein</keyword>
<keyword id="KW-0689">Ribosomal protein</keyword>
<keyword id="KW-0694">RNA-binding</keyword>
<keyword id="KW-0699">rRNA-binding</keyword>
<proteinExistence type="inferred from homology"/>
<geneLocation type="chloroplast"/>
<dbReference type="EMBL" id="AP009372">
    <property type="protein sequence ID" value="BAF50308.1"/>
    <property type="molecule type" value="Genomic_DNA"/>
</dbReference>
<dbReference type="RefSeq" id="YP_001123484.1">
    <property type="nucleotide sequence ID" value="NC_009271.1"/>
</dbReference>
<dbReference type="SMR" id="A4QKV3"/>
<dbReference type="GeneID" id="4962631"/>
<dbReference type="GO" id="GO:0009507">
    <property type="term" value="C:chloroplast"/>
    <property type="evidence" value="ECO:0007669"/>
    <property type="project" value="UniProtKB-SubCell"/>
</dbReference>
<dbReference type="GO" id="GO:0005763">
    <property type="term" value="C:mitochondrial small ribosomal subunit"/>
    <property type="evidence" value="ECO:0007669"/>
    <property type="project" value="TreeGrafter"/>
</dbReference>
<dbReference type="GO" id="GO:0070181">
    <property type="term" value="F:small ribosomal subunit rRNA binding"/>
    <property type="evidence" value="ECO:0007669"/>
    <property type="project" value="TreeGrafter"/>
</dbReference>
<dbReference type="GO" id="GO:0003735">
    <property type="term" value="F:structural constituent of ribosome"/>
    <property type="evidence" value="ECO:0007669"/>
    <property type="project" value="InterPro"/>
</dbReference>
<dbReference type="GO" id="GO:0006412">
    <property type="term" value="P:translation"/>
    <property type="evidence" value="ECO:0007669"/>
    <property type="project" value="UniProtKB-UniRule"/>
</dbReference>
<dbReference type="FunFam" id="4.10.640.10:FF:000002">
    <property type="entry name" value="30S ribosomal protein S18, chloroplastic"/>
    <property type="match status" value="1"/>
</dbReference>
<dbReference type="Gene3D" id="4.10.640.10">
    <property type="entry name" value="Ribosomal protein S18"/>
    <property type="match status" value="1"/>
</dbReference>
<dbReference type="HAMAP" id="MF_00270">
    <property type="entry name" value="Ribosomal_bS18"/>
    <property type="match status" value="1"/>
</dbReference>
<dbReference type="InterPro" id="IPR001648">
    <property type="entry name" value="Ribosomal_bS18"/>
</dbReference>
<dbReference type="InterPro" id="IPR018275">
    <property type="entry name" value="Ribosomal_bS18_CS"/>
</dbReference>
<dbReference type="InterPro" id="IPR036870">
    <property type="entry name" value="Ribosomal_bS18_sf"/>
</dbReference>
<dbReference type="NCBIfam" id="TIGR00165">
    <property type="entry name" value="S18"/>
    <property type="match status" value="1"/>
</dbReference>
<dbReference type="PANTHER" id="PTHR13479">
    <property type="entry name" value="30S RIBOSOMAL PROTEIN S18"/>
    <property type="match status" value="1"/>
</dbReference>
<dbReference type="PANTHER" id="PTHR13479:SF40">
    <property type="entry name" value="SMALL RIBOSOMAL SUBUNIT PROTEIN BS18M"/>
    <property type="match status" value="1"/>
</dbReference>
<dbReference type="Pfam" id="PF01084">
    <property type="entry name" value="Ribosomal_S18"/>
    <property type="match status" value="1"/>
</dbReference>
<dbReference type="PRINTS" id="PR00974">
    <property type="entry name" value="RIBOSOMALS18"/>
</dbReference>
<dbReference type="SUPFAM" id="SSF46911">
    <property type="entry name" value="Ribosomal protein S18"/>
    <property type="match status" value="1"/>
</dbReference>
<dbReference type="PROSITE" id="PS00057">
    <property type="entry name" value="RIBOSOMAL_S18"/>
    <property type="match status" value="1"/>
</dbReference>
<feature type="chain" id="PRO_0000345576" description="Small ribosomal subunit protein bS18c">
    <location>
        <begin position="1"/>
        <end position="101"/>
    </location>
</feature>
<organism>
    <name type="scientific">Crucihimalaya wallichii</name>
    <name type="common">Rock-cress</name>
    <name type="synonym">Arabidopsis campestris</name>
    <dbReference type="NCBI Taxonomy" id="78192"/>
    <lineage>
        <taxon>Eukaryota</taxon>
        <taxon>Viridiplantae</taxon>
        <taxon>Streptophyta</taxon>
        <taxon>Embryophyta</taxon>
        <taxon>Tracheophyta</taxon>
        <taxon>Spermatophyta</taxon>
        <taxon>Magnoliopsida</taxon>
        <taxon>eudicotyledons</taxon>
        <taxon>Gunneridae</taxon>
        <taxon>Pentapetalae</taxon>
        <taxon>rosids</taxon>
        <taxon>malvids</taxon>
        <taxon>Brassicales</taxon>
        <taxon>Brassicaceae</taxon>
        <taxon>Crucihimalayeae</taxon>
        <taxon>Crucihimalaya</taxon>
    </lineage>
</organism>